<protein>
    <recommendedName>
        <fullName>Kelch-like protein 14</fullName>
    </recommendedName>
    <alternativeName>
        <fullName>Protein interactor of Torsin-1A</fullName>
        <shortName>Printor</shortName>
        <shortName>Protein interactor of torsinA</shortName>
    </alternativeName>
</protein>
<keyword id="KW-0963">Cytoplasm</keyword>
<keyword id="KW-0256">Endoplasmic reticulum</keyword>
<keyword id="KW-0880">Kelch repeat</keyword>
<keyword id="KW-0472">Membrane</keyword>
<keyword id="KW-1185">Reference proteome</keyword>
<keyword id="KW-0677">Repeat</keyword>
<sequence>MSRSGDRTSTFDPSHSDNLLHGLNLLWRKQLFCDVTLTAQGQQFHCHKAVLASCSQYFRSLFSSHPPLGGGVGGQDGLGAPKDQQQQQQPQQQPPQQQQPPPQEEPGTPSSSPDDKLLTSPRAINNLVLQGCSSIGLRLVLEYLYTANVTLSLDTVEEVLSVSKILHIPQVTKLCVQFLNDQISVQNYKQVCKIAALHGLEETKKLANKYLVEDVLLLNFEEMRALLDSLPPPVESELALFQMSVLWLEHDRETRMQYAPDLMKRLRFALIPAPELVERVQSVDFMRTDPVCQKLLLDAMNYHLMPFRQHCRQSLASRIRSNKKMLLLVGGLPPGPDRLPSNLVQYYDDEKKTWKILTIMPYNSAHHCVVEVENFLFVLGGEDQWNPNGKHSTNFVSRYDPRFNSWIQLPPMQERRASFYACRLDKHLYVIGGRNETGYLSSVECYNLDTNEWRYVSSLPQPLAAHAGAVHNGKIYISGGVHNGEYVPWLYCYDPVMDVWARKQDMNTKRAIHTLAVMNDRLYAIGGNHLKGFSHLDVMLVECYDPKGDQWNILQTPILEGRSGPGCAVLDDSIYLVGGYSWSMGAYKSSTICYCPEKGTWTELEGDVAEPLAGPACATVILPACVPYNK</sequence>
<accession>Q69ZK5</accession>
<accession>Q9CU51</accession>
<dbReference type="EMBL" id="CH466557">
    <property type="protein sequence ID" value="EDK96966.1"/>
    <property type="molecule type" value="Genomic_DNA"/>
</dbReference>
<dbReference type="EMBL" id="AK018108">
    <property type="protein sequence ID" value="BAB31073.1"/>
    <property type="molecule type" value="mRNA"/>
</dbReference>
<dbReference type="EMBL" id="AK173163">
    <property type="protein sequence ID" value="BAD32441.1"/>
    <property type="molecule type" value="mRNA"/>
</dbReference>
<dbReference type="CCDS" id="CCDS37748.1"/>
<dbReference type="RefSeq" id="NP_001074872.1">
    <property type="nucleotide sequence ID" value="NM_001081403.2"/>
</dbReference>
<dbReference type="RefSeq" id="XP_006525885.1">
    <property type="nucleotide sequence ID" value="XM_006525822.2"/>
</dbReference>
<dbReference type="RefSeq" id="XP_006525886.1">
    <property type="nucleotide sequence ID" value="XM_006525823.4"/>
</dbReference>
<dbReference type="SMR" id="Q69ZK5"/>
<dbReference type="BioGRID" id="230376">
    <property type="interactions" value="1"/>
</dbReference>
<dbReference type="FunCoup" id="Q69ZK5">
    <property type="interactions" value="58"/>
</dbReference>
<dbReference type="STRING" id="10090.ENSMUSP00000113755"/>
<dbReference type="PhosphoSitePlus" id="Q69ZK5"/>
<dbReference type="PaxDb" id="10090-ENSMUSP00000113755"/>
<dbReference type="ProteomicsDB" id="264775"/>
<dbReference type="Antibodypedia" id="8317">
    <property type="antibodies" value="166 antibodies from 21 providers"/>
</dbReference>
<dbReference type="Ensembl" id="ENSMUST00000049105.11">
    <property type="protein sequence ID" value="ENSMUSP00000042015.5"/>
    <property type="gene ID" value="ENSMUSG00000042514.12"/>
</dbReference>
<dbReference type="Ensembl" id="ENSMUST00000122333.2">
    <property type="protein sequence ID" value="ENSMUSP00000113755.2"/>
    <property type="gene ID" value="ENSMUSG00000042514.12"/>
</dbReference>
<dbReference type="GeneID" id="225266"/>
<dbReference type="KEGG" id="mmu:225266"/>
<dbReference type="UCSC" id="uc008efi.1">
    <property type="organism name" value="mouse"/>
</dbReference>
<dbReference type="AGR" id="MGI:1921249"/>
<dbReference type="CTD" id="57565"/>
<dbReference type="MGI" id="MGI:1921249">
    <property type="gene designation" value="Klhl14"/>
</dbReference>
<dbReference type="VEuPathDB" id="HostDB:ENSMUSG00000042514"/>
<dbReference type="eggNOG" id="KOG4441">
    <property type="taxonomic scope" value="Eukaryota"/>
</dbReference>
<dbReference type="GeneTree" id="ENSGT00940000159556"/>
<dbReference type="HOGENOM" id="CLU_004253_14_3_1"/>
<dbReference type="InParanoid" id="Q69ZK5"/>
<dbReference type="OMA" id="RETRMQH"/>
<dbReference type="OrthoDB" id="6350321at2759"/>
<dbReference type="PhylomeDB" id="Q69ZK5"/>
<dbReference type="TreeFam" id="TF328485"/>
<dbReference type="BioGRID-ORCS" id="225266">
    <property type="hits" value="1 hit in 76 CRISPR screens"/>
</dbReference>
<dbReference type="ChiTaRS" id="Klhl14">
    <property type="organism name" value="mouse"/>
</dbReference>
<dbReference type="PRO" id="PR:Q69ZK5"/>
<dbReference type="Proteomes" id="UP000000589">
    <property type="component" value="Chromosome 18"/>
</dbReference>
<dbReference type="RNAct" id="Q69ZK5">
    <property type="molecule type" value="protein"/>
</dbReference>
<dbReference type="Bgee" id="ENSMUSG00000042514">
    <property type="expression patterns" value="Expressed in lumbar subsegment of spinal cord and 88 other cell types or tissues"/>
</dbReference>
<dbReference type="GO" id="GO:0015629">
    <property type="term" value="C:actin cytoskeleton"/>
    <property type="evidence" value="ECO:0007669"/>
    <property type="project" value="Ensembl"/>
</dbReference>
<dbReference type="GO" id="GO:0016235">
    <property type="term" value="C:aggresome"/>
    <property type="evidence" value="ECO:0007669"/>
    <property type="project" value="Ensembl"/>
</dbReference>
<dbReference type="GO" id="GO:0005829">
    <property type="term" value="C:cytosol"/>
    <property type="evidence" value="ECO:0007669"/>
    <property type="project" value="UniProtKB-SubCell"/>
</dbReference>
<dbReference type="GO" id="GO:0005783">
    <property type="term" value="C:endoplasmic reticulum"/>
    <property type="evidence" value="ECO:0000266"/>
    <property type="project" value="MGI"/>
</dbReference>
<dbReference type="GO" id="GO:0005789">
    <property type="term" value="C:endoplasmic reticulum membrane"/>
    <property type="evidence" value="ECO:0007669"/>
    <property type="project" value="UniProtKB-SubCell"/>
</dbReference>
<dbReference type="GO" id="GO:0043005">
    <property type="term" value="C:neuron projection"/>
    <property type="evidence" value="ECO:0000314"/>
    <property type="project" value="MGI"/>
</dbReference>
<dbReference type="GO" id="GO:0043025">
    <property type="term" value="C:neuronal cell body"/>
    <property type="evidence" value="ECO:0000314"/>
    <property type="project" value="MGI"/>
</dbReference>
<dbReference type="CDD" id="cd18453">
    <property type="entry name" value="BACK_KLHL14"/>
    <property type="match status" value="1"/>
</dbReference>
<dbReference type="CDD" id="cd18243">
    <property type="entry name" value="BTB_POZ_KLHL14_printor"/>
    <property type="match status" value="1"/>
</dbReference>
<dbReference type="FunFam" id="2.120.10.80:FF:000099">
    <property type="entry name" value="Kelch like family member 14"/>
    <property type="match status" value="1"/>
</dbReference>
<dbReference type="FunFam" id="1.25.40.420:FF:000010">
    <property type="entry name" value="Kelch-like family member 14"/>
    <property type="match status" value="1"/>
</dbReference>
<dbReference type="Gene3D" id="1.25.40.420">
    <property type="match status" value="1"/>
</dbReference>
<dbReference type="Gene3D" id="2.120.10.80">
    <property type="entry name" value="Kelch-type beta propeller"/>
    <property type="match status" value="2"/>
</dbReference>
<dbReference type="Gene3D" id="3.30.710.10">
    <property type="entry name" value="Potassium Channel Kv1.1, Chain A"/>
    <property type="match status" value="1"/>
</dbReference>
<dbReference type="InterPro" id="IPR011705">
    <property type="entry name" value="BACK"/>
</dbReference>
<dbReference type="InterPro" id="IPR017096">
    <property type="entry name" value="BTB-kelch_protein"/>
</dbReference>
<dbReference type="InterPro" id="IPR000210">
    <property type="entry name" value="BTB/POZ_dom"/>
</dbReference>
<dbReference type="InterPro" id="IPR015915">
    <property type="entry name" value="Kelch-typ_b-propeller"/>
</dbReference>
<dbReference type="InterPro" id="IPR006652">
    <property type="entry name" value="Kelch_1"/>
</dbReference>
<dbReference type="InterPro" id="IPR047027">
    <property type="entry name" value="KLHL14_BACK"/>
</dbReference>
<dbReference type="InterPro" id="IPR030584">
    <property type="entry name" value="KLHL14_BTB_POZ"/>
</dbReference>
<dbReference type="InterPro" id="IPR011333">
    <property type="entry name" value="SKP1/BTB/POZ_sf"/>
</dbReference>
<dbReference type="PANTHER" id="PTHR45632:SF6">
    <property type="entry name" value="KELCH-LIKE PROTEIN 14"/>
    <property type="match status" value="1"/>
</dbReference>
<dbReference type="PANTHER" id="PTHR45632">
    <property type="entry name" value="LD33804P"/>
    <property type="match status" value="1"/>
</dbReference>
<dbReference type="Pfam" id="PF07707">
    <property type="entry name" value="BACK"/>
    <property type="match status" value="1"/>
</dbReference>
<dbReference type="Pfam" id="PF00651">
    <property type="entry name" value="BTB"/>
    <property type="match status" value="2"/>
</dbReference>
<dbReference type="Pfam" id="PF01344">
    <property type="entry name" value="Kelch_1"/>
    <property type="match status" value="1"/>
</dbReference>
<dbReference type="Pfam" id="PF24681">
    <property type="entry name" value="Kelch_KLHDC2_KLHL20_DRC7"/>
    <property type="match status" value="1"/>
</dbReference>
<dbReference type="PIRSF" id="PIRSF037037">
    <property type="entry name" value="Kelch-like_protein_gigaxonin"/>
    <property type="match status" value="1"/>
</dbReference>
<dbReference type="SMART" id="SM00875">
    <property type="entry name" value="BACK"/>
    <property type="match status" value="1"/>
</dbReference>
<dbReference type="SMART" id="SM00225">
    <property type="entry name" value="BTB"/>
    <property type="match status" value="1"/>
</dbReference>
<dbReference type="SMART" id="SM00612">
    <property type="entry name" value="Kelch"/>
    <property type="match status" value="6"/>
</dbReference>
<dbReference type="SUPFAM" id="SSF117281">
    <property type="entry name" value="Kelch motif"/>
    <property type="match status" value="1"/>
</dbReference>
<dbReference type="SUPFAM" id="SSF54695">
    <property type="entry name" value="POZ domain"/>
    <property type="match status" value="1"/>
</dbReference>
<dbReference type="PROSITE" id="PS50097">
    <property type="entry name" value="BTB"/>
    <property type="match status" value="1"/>
</dbReference>
<feature type="chain" id="PRO_0000409552" description="Kelch-like protein 14">
    <location>
        <begin position="1"/>
        <end position="630"/>
    </location>
</feature>
<feature type="domain" description="BTB" evidence="2">
    <location>
        <begin position="33"/>
        <end position="153"/>
    </location>
</feature>
<feature type="domain" description="BACK">
    <location>
        <begin position="212"/>
        <end position="281"/>
    </location>
</feature>
<feature type="repeat" description="Kelch 1">
    <location>
        <begin position="325"/>
        <end position="374"/>
    </location>
</feature>
<feature type="repeat" description="Kelch 2">
    <location>
        <begin position="375"/>
        <end position="426"/>
    </location>
</feature>
<feature type="repeat" description="Kelch 3">
    <location>
        <begin position="427"/>
        <end position="473"/>
    </location>
</feature>
<feature type="repeat" description="Kelch 4">
    <location>
        <begin position="475"/>
        <end position="520"/>
    </location>
</feature>
<feature type="repeat" description="Kelch 5">
    <location>
        <begin position="522"/>
        <end position="572"/>
    </location>
</feature>
<feature type="repeat" description="Kelch 6">
    <location>
        <begin position="574"/>
        <end position="622"/>
    </location>
</feature>
<feature type="region of interest" description="Disordered" evidence="3">
    <location>
        <begin position="69"/>
        <end position="117"/>
    </location>
</feature>
<feature type="compositionally biased region" description="Low complexity" evidence="3">
    <location>
        <begin position="84"/>
        <end position="96"/>
    </location>
</feature>
<feature type="sequence conflict" description="In Ref. 2; BAB31073." evidence="5" ref="2">
    <original>Q</original>
    <variation>E</variation>
    <location>
        <position position="96"/>
    </location>
</feature>
<feature type="sequence conflict" description="In Ref. 2; BAB31073." evidence="5" ref="2">
    <original>R</original>
    <variation>H</variation>
    <location>
        <position position="252"/>
    </location>
</feature>
<feature type="sequence conflict" description="In Ref. 2; BAB31073." evidence="5" ref="2">
    <original>M</original>
    <variation>L</variation>
    <location>
        <position position="300"/>
    </location>
</feature>
<feature type="sequence conflict" description="In Ref. 2; BAB31073." evidence="5" ref="2">
    <original>Y</original>
    <variation>D</variation>
    <location>
        <position position="439"/>
    </location>
</feature>
<feature type="sequence conflict" description="In Ref. 2; BAB31073." evidence="5" ref="2">
    <original>W</original>
    <variation>R</variation>
    <location>
        <position position="453"/>
    </location>
</feature>
<feature type="sequence conflict" description="In Ref. 2; BAB31073." evidence="5" ref="2">
    <original>L</original>
    <variation>P</variation>
    <location>
        <position position="515"/>
    </location>
</feature>
<reference key="1">
    <citation type="submission" date="2005-07" db="EMBL/GenBank/DDBJ databases">
        <authorList>
            <person name="Mural R.J."/>
            <person name="Adams M.D."/>
            <person name="Myers E.W."/>
            <person name="Smith H.O."/>
            <person name="Venter J.C."/>
        </authorList>
    </citation>
    <scope>NUCLEOTIDE SEQUENCE [LARGE SCALE GENOMIC DNA]</scope>
</reference>
<reference key="2">
    <citation type="journal article" date="2005" name="Science">
        <title>The transcriptional landscape of the mammalian genome.</title>
        <authorList>
            <person name="Carninci P."/>
            <person name="Kasukawa T."/>
            <person name="Katayama S."/>
            <person name="Gough J."/>
            <person name="Frith M.C."/>
            <person name="Maeda N."/>
            <person name="Oyama R."/>
            <person name="Ravasi T."/>
            <person name="Lenhard B."/>
            <person name="Wells C."/>
            <person name="Kodzius R."/>
            <person name="Shimokawa K."/>
            <person name="Bajic V.B."/>
            <person name="Brenner S.E."/>
            <person name="Batalov S."/>
            <person name="Forrest A.R."/>
            <person name="Zavolan M."/>
            <person name="Davis M.J."/>
            <person name="Wilming L.G."/>
            <person name="Aidinis V."/>
            <person name="Allen J.E."/>
            <person name="Ambesi-Impiombato A."/>
            <person name="Apweiler R."/>
            <person name="Aturaliya R.N."/>
            <person name="Bailey T.L."/>
            <person name="Bansal M."/>
            <person name="Baxter L."/>
            <person name="Beisel K.W."/>
            <person name="Bersano T."/>
            <person name="Bono H."/>
            <person name="Chalk A.M."/>
            <person name="Chiu K.P."/>
            <person name="Choudhary V."/>
            <person name="Christoffels A."/>
            <person name="Clutterbuck D.R."/>
            <person name="Crowe M.L."/>
            <person name="Dalla E."/>
            <person name="Dalrymple B.P."/>
            <person name="de Bono B."/>
            <person name="Della Gatta G."/>
            <person name="di Bernardo D."/>
            <person name="Down T."/>
            <person name="Engstrom P."/>
            <person name="Fagiolini M."/>
            <person name="Faulkner G."/>
            <person name="Fletcher C.F."/>
            <person name="Fukushima T."/>
            <person name="Furuno M."/>
            <person name="Futaki S."/>
            <person name="Gariboldi M."/>
            <person name="Georgii-Hemming P."/>
            <person name="Gingeras T.R."/>
            <person name="Gojobori T."/>
            <person name="Green R.E."/>
            <person name="Gustincich S."/>
            <person name="Harbers M."/>
            <person name="Hayashi Y."/>
            <person name="Hensch T.K."/>
            <person name="Hirokawa N."/>
            <person name="Hill D."/>
            <person name="Huminiecki L."/>
            <person name="Iacono M."/>
            <person name="Ikeo K."/>
            <person name="Iwama A."/>
            <person name="Ishikawa T."/>
            <person name="Jakt M."/>
            <person name="Kanapin A."/>
            <person name="Katoh M."/>
            <person name="Kawasawa Y."/>
            <person name="Kelso J."/>
            <person name="Kitamura H."/>
            <person name="Kitano H."/>
            <person name="Kollias G."/>
            <person name="Krishnan S.P."/>
            <person name="Kruger A."/>
            <person name="Kummerfeld S.K."/>
            <person name="Kurochkin I.V."/>
            <person name="Lareau L.F."/>
            <person name="Lazarevic D."/>
            <person name="Lipovich L."/>
            <person name="Liu J."/>
            <person name="Liuni S."/>
            <person name="McWilliam S."/>
            <person name="Madan Babu M."/>
            <person name="Madera M."/>
            <person name="Marchionni L."/>
            <person name="Matsuda H."/>
            <person name="Matsuzawa S."/>
            <person name="Miki H."/>
            <person name="Mignone F."/>
            <person name="Miyake S."/>
            <person name="Morris K."/>
            <person name="Mottagui-Tabar S."/>
            <person name="Mulder N."/>
            <person name="Nakano N."/>
            <person name="Nakauchi H."/>
            <person name="Ng P."/>
            <person name="Nilsson R."/>
            <person name="Nishiguchi S."/>
            <person name="Nishikawa S."/>
            <person name="Nori F."/>
            <person name="Ohara O."/>
            <person name="Okazaki Y."/>
            <person name="Orlando V."/>
            <person name="Pang K.C."/>
            <person name="Pavan W.J."/>
            <person name="Pavesi G."/>
            <person name="Pesole G."/>
            <person name="Petrovsky N."/>
            <person name="Piazza S."/>
            <person name="Reed J."/>
            <person name="Reid J.F."/>
            <person name="Ring B.Z."/>
            <person name="Ringwald M."/>
            <person name="Rost B."/>
            <person name="Ruan Y."/>
            <person name="Salzberg S.L."/>
            <person name="Sandelin A."/>
            <person name="Schneider C."/>
            <person name="Schoenbach C."/>
            <person name="Sekiguchi K."/>
            <person name="Semple C.A."/>
            <person name="Seno S."/>
            <person name="Sessa L."/>
            <person name="Sheng Y."/>
            <person name="Shibata Y."/>
            <person name="Shimada H."/>
            <person name="Shimada K."/>
            <person name="Silva D."/>
            <person name="Sinclair B."/>
            <person name="Sperling S."/>
            <person name="Stupka E."/>
            <person name="Sugiura K."/>
            <person name="Sultana R."/>
            <person name="Takenaka Y."/>
            <person name="Taki K."/>
            <person name="Tammoja K."/>
            <person name="Tan S.L."/>
            <person name="Tang S."/>
            <person name="Taylor M.S."/>
            <person name="Tegner J."/>
            <person name="Teichmann S.A."/>
            <person name="Ueda H.R."/>
            <person name="van Nimwegen E."/>
            <person name="Verardo R."/>
            <person name="Wei C.L."/>
            <person name="Yagi K."/>
            <person name="Yamanishi H."/>
            <person name="Zabarovsky E."/>
            <person name="Zhu S."/>
            <person name="Zimmer A."/>
            <person name="Hide W."/>
            <person name="Bult C."/>
            <person name="Grimmond S.M."/>
            <person name="Teasdale R.D."/>
            <person name="Liu E.T."/>
            <person name="Brusic V."/>
            <person name="Quackenbush J."/>
            <person name="Wahlestedt C."/>
            <person name="Mattick J.S."/>
            <person name="Hume D.A."/>
            <person name="Kai C."/>
            <person name="Sasaki D."/>
            <person name="Tomaru Y."/>
            <person name="Fukuda S."/>
            <person name="Kanamori-Katayama M."/>
            <person name="Suzuki M."/>
            <person name="Aoki J."/>
            <person name="Arakawa T."/>
            <person name="Iida J."/>
            <person name="Imamura K."/>
            <person name="Itoh M."/>
            <person name="Kato T."/>
            <person name="Kawaji H."/>
            <person name="Kawagashira N."/>
            <person name="Kawashima T."/>
            <person name="Kojima M."/>
            <person name="Kondo S."/>
            <person name="Konno H."/>
            <person name="Nakano K."/>
            <person name="Ninomiya N."/>
            <person name="Nishio T."/>
            <person name="Okada M."/>
            <person name="Plessy C."/>
            <person name="Shibata K."/>
            <person name="Shiraki T."/>
            <person name="Suzuki S."/>
            <person name="Tagami M."/>
            <person name="Waki K."/>
            <person name="Watahiki A."/>
            <person name="Okamura-Oho Y."/>
            <person name="Suzuki H."/>
            <person name="Kawai J."/>
            <person name="Hayashizaki Y."/>
        </authorList>
    </citation>
    <scope>NUCLEOTIDE SEQUENCE [LARGE SCALE MRNA] OF 96-630</scope>
</reference>
<reference key="3">
    <citation type="journal article" date="2004" name="DNA Res.">
        <title>Prediction of the coding sequences of mouse homologues of KIAA gene: IV. The complete nucleotide sequences of 500 mouse KIAA-homologous cDNAs identified by screening of terminal sequences of cDNA clones randomly sampled from size-fractionated libraries.</title>
        <authorList>
            <person name="Okazaki N."/>
            <person name="Kikuno R."/>
            <person name="Ohara R."/>
            <person name="Inamoto S."/>
            <person name="Koseki H."/>
            <person name="Hiraoka S."/>
            <person name="Saga Y."/>
            <person name="Seino S."/>
            <person name="Nishimura M."/>
            <person name="Kaisho T."/>
            <person name="Hoshino K."/>
            <person name="Kitamura H."/>
            <person name="Nagase T."/>
            <person name="Ohara O."/>
            <person name="Koga H."/>
        </authorList>
    </citation>
    <scope>NUCLEOTIDE SEQUENCE [LARGE SCALE MRNA] OF 97-630</scope>
    <source>
        <tissue>Fetal brain</tissue>
    </source>
</reference>
<reference key="4">
    <citation type="journal article" date="2009" name="J. Biol. Chem.">
        <title>Printor, a novel torsinA-interacting protein implicated in dystonia pathogenesis.</title>
        <authorList>
            <person name="Giles L.M."/>
            <person name="Li L."/>
            <person name="Chin L.S."/>
        </authorList>
    </citation>
    <scope>INTERACTION WITH TOR1A</scope>
    <scope>SUBCELLULAR LOCATION</scope>
    <scope>TISSUE SPECIFICITY</scope>
</reference>
<comment type="subunit">
    <text evidence="4">Interacts with TOR1A.</text>
</comment>
<comment type="subcellular location">
    <subcellularLocation>
        <location evidence="1">Cytoplasm</location>
        <location evidence="1">Cytosol</location>
    </subcellularLocation>
    <subcellularLocation>
        <location evidence="1">Endoplasmic reticulum membrane</location>
    </subcellularLocation>
    <text evidence="4">In neurons, located in cell bodies, as well as in neurites.</text>
</comment>
<comment type="tissue specificity">
    <text evidence="4">Expressed in the brain, primarily in neurons. In the cerebral cortex, mostly expressed in layers I and II (at protein level). Also observed in some neurons of the corpus striatum (at protein level). Expressed at high levels in the hippocampus, including in pyramidal cells of the CA1 and CA3 layers (at protein level). In the cerebellum, expression in Purkinje cells is higher than in granular cells (at protein level). Also detected in the medial septum, ventral pallidum, thalamus, hypothalamus, amygdala, inferior colliculi, locus caeruleus, peripyramidal nucleus, raphe nucleus, reticular formation, spinal trigeminal nucleus, and vestibular nuclei (at protein level). Low expression, if any, in glial cells (at protein level). Not observed in the corpus callosum.</text>
</comment>
<organism>
    <name type="scientific">Mus musculus</name>
    <name type="common">Mouse</name>
    <dbReference type="NCBI Taxonomy" id="10090"/>
    <lineage>
        <taxon>Eukaryota</taxon>
        <taxon>Metazoa</taxon>
        <taxon>Chordata</taxon>
        <taxon>Craniata</taxon>
        <taxon>Vertebrata</taxon>
        <taxon>Euteleostomi</taxon>
        <taxon>Mammalia</taxon>
        <taxon>Eutheria</taxon>
        <taxon>Euarchontoglires</taxon>
        <taxon>Glires</taxon>
        <taxon>Rodentia</taxon>
        <taxon>Myomorpha</taxon>
        <taxon>Muroidea</taxon>
        <taxon>Muridae</taxon>
        <taxon>Murinae</taxon>
        <taxon>Mus</taxon>
        <taxon>Mus</taxon>
    </lineage>
</organism>
<gene>
    <name type="primary">Klhl14</name>
    <name type="synonym">Kiaa1384</name>
</gene>
<proteinExistence type="evidence at protein level"/>
<evidence type="ECO:0000250" key="1"/>
<evidence type="ECO:0000255" key="2">
    <source>
        <dbReference type="PROSITE-ProRule" id="PRU00037"/>
    </source>
</evidence>
<evidence type="ECO:0000256" key="3">
    <source>
        <dbReference type="SAM" id="MobiDB-lite"/>
    </source>
</evidence>
<evidence type="ECO:0000269" key="4">
    <source>
    </source>
</evidence>
<evidence type="ECO:0000305" key="5"/>
<name>KLH14_MOUSE</name>